<evidence type="ECO:0000255" key="1"/>
<evidence type="ECO:0000269" key="2">
    <source>
    </source>
</evidence>
<evidence type="ECO:0000303" key="3">
    <source>
    </source>
</evidence>
<evidence type="ECO:0000305" key="4"/>
<proteinExistence type="inferred from homology"/>
<organism>
    <name type="scientific">Escherichia coli</name>
    <dbReference type="NCBI Taxonomy" id="562"/>
    <lineage>
        <taxon>Bacteria</taxon>
        <taxon>Pseudomonadati</taxon>
        <taxon>Pseudomonadota</taxon>
        <taxon>Gammaproteobacteria</taxon>
        <taxon>Enterobacterales</taxon>
        <taxon>Enterobacteriaceae</taxon>
        <taxon>Escherichia</taxon>
    </lineage>
</organism>
<feature type="chain" id="PRO_0000455230" description="Pycsar effector protein EcPycTM">
    <location>
        <begin position="1"/>
        <end position="185"/>
    </location>
</feature>
<feature type="transmembrane region" description="Helical" evidence="1">
    <location>
        <begin position="32"/>
        <end position="52"/>
    </location>
</feature>
<feature type="transmembrane region" description="Helical" evidence="1">
    <location>
        <begin position="63"/>
        <end position="83"/>
    </location>
</feature>
<feature type="transmembrane region" description="Helical" evidence="1">
    <location>
        <begin position="141"/>
        <end position="161"/>
    </location>
</feature>
<dbReference type="EMBL" id="CXXA01000028">
    <property type="status" value="NOT_ANNOTATED_CDS"/>
    <property type="molecule type" value="Genomic_DNA"/>
</dbReference>
<dbReference type="RefSeq" id="WP_001682322.1">
    <property type="nucleotide sequence ID" value="NZ_JAINTT010000021.1"/>
</dbReference>
<dbReference type="SMR" id="P0DV25"/>
<dbReference type="GO" id="GO:0005886">
    <property type="term" value="C:plasma membrane"/>
    <property type="evidence" value="ECO:0007669"/>
    <property type="project" value="UniProtKB-SubCell"/>
</dbReference>
<dbReference type="GO" id="GO:0000166">
    <property type="term" value="F:nucleotide binding"/>
    <property type="evidence" value="ECO:0007669"/>
    <property type="project" value="UniProtKB-KW"/>
</dbReference>
<dbReference type="GO" id="GO:0051607">
    <property type="term" value="P:defense response to virus"/>
    <property type="evidence" value="ECO:0007669"/>
    <property type="project" value="UniProtKB-KW"/>
</dbReference>
<gene>
    <name evidence="3" type="primary">pycTM</name>
    <name type="ORF">Ga0132381_1286</name>
</gene>
<keyword id="KW-0051">Antiviral defense</keyword>
<keyword id="KW-0997">Cell inner membrane</keyword>
<keyword id="KW-1003">Cell membrane</keyword>
<keyword id="KW-0472">Membrane</keyword>
<keyword id="KW-0547">Nucleotide-binding</keyword>
<keyword id="KW-0812">Transmembrane</keyword>
<keyword id="KW-1133">Transmembrane helix</keyword>
<sequence length="185" mass="21141">MEIEKNKEKIKLQFDIIKRTDGYISTTNNKAALLLAVNGATATILSNKVGYFAGLFHENCLYMVIFFLLLFMISIFIFMSVLLSLKSIIPNMRGVKEKWDSTDSNVSFVYISSNNDGKNYYKKYLMESEDGLLLDMCEQSFILSCIAKQKFLFFSSAVSWIKRAYACIIVLVIFKFVDYVNGALL</sequence>
<comment type="function">
    <text evidence="2">Pycsar (pyrimidine cyclase system for antiphage resistance) provides immunity against bacteriophage. The pyrimidine cyclase (PycC) synthesizes cyclic nucleotides in response to infection; these serve as specific second messenger signals. The signals activate the adjacent effector, leading to bacterial cell death and abortive phage infection. A clade E Pycsar system.</text>
</comment>
<comment type="function">
    <text evidence="2">The effector component of a two-gene Pycsar system. Expression of this and adjacent cytidylate cyclase EcPycC (AC P0DV24) confers resistance to bacteriophage P1 and T5; this protein is required for resistance. When cells expressing the Pycsar system are infected by phage T5 at low multiplicity of infection (0.2 MOI) the culture survives, at 2.0 MOI bacteria enter growth arrest. The same cells enter growth arrest after exposure to 250 uM cCMP but not cUMP; this effector protein responds only to cCMP, usually produced by its cognate NTP cyclase. Some of the cells treated with cCMP have abnormal membrane protrusions, probably due to effects on membrane integrity.</text>
</comment>
<comment type="subcellular location">
    <subcellularLocation>
        <location evidence="4">Cell inner membrane</location>
        <topology evidence="1">Multi-pass membrane protein</topology>
    </subcellularLocation>
</comment>
<comment type="miscellaneous">
    <text evidence="2">T5 phage that escape Pycsar have mutated major capsid protein pb8 (D20, AC Q6QGD8); infection with these phage elicits less cCMP production. Ectopic expression of the capsid protein in addition to both Pycsar genes does not induce effector-mediated toxicity, suggesting another factor is necessary.</text>
</comment>
<accession>P0DV25</accession>
<protein>
    <recommendedName>
        <fullName>Pycsar effector protein EcPycTM</fullName>
        <shortName evidence="3">EcPycTM</shortName>
    </recommendedName>
</protein>
<name>PCTM1_ECOLX</name>
<reference key="1">
    <citation type="submission" date="2015-08" db="EMBL/GenBank/DDBJ databases">
        <authorList>
            <person name="Hur Y.J."/>
        </authorList>
    </citation>
    <scope>NUCLEOTIDE SEQUENCE [LARGE SCALE GENOMIC DNA]</scope>
    <source>
        <strain>E831</strain>
    </source>
</reference>
<reference key="2">
    <citation type="journal article" date="2021" name="Cell">
        <title>Cyclic CMP and cyclic UMP mediate bacterial immunity against phages.</title>
        <authorList>
            <person name="Tal N."/>
            <person name="Morehouse B.R."/>
            <person name="Millman A."/>
            <person name="Stokar-Avihail A."/>
            <person name="Avraham C."/>
            <person name="Fedorenko T."/>
            <person name="Yirmiya E."/>
            <person name="Herbst E."/>
            <person name="Brandis A."/>
            <person name="Mehlman T."/>
            <person name="Oppenheimer-Shaanan Y."/>
            <person name="Keszei A.F.A."/>
            <person name="Shao S."/>
            <person name="Amitai G."/>
            <person name="Kranzusch P.J."/>
            <person name="Sorek R."/>
        </authorList>
    </citation>
    <scope>FUNCTION</scope>
    <scope>ANTIVIRAL DEFENSE</scope>
    <scope>CLASSIFICATION</scope>
    <source>
        <strain>E831</strain>
    </source>
</reference>